<organism>
    <name type="scientific">Sus scrofa</name>
    <name type="common">Pig</name>
    <dbReference type="NCBI Taxonomy" id="9823"/>
    <lineage>
        <taxon>Eukaryota</taxon>
        <taxon>Metazoa</taxon>
        <taxon>Chordata</taxon>
        <taxon>Craniata</taxon>
        <taxon>Vertebrata</taxon>
        <taxon>Euteleostomi</taxon>
        <taxon>Mammalia</taxon>
        <taxon>Eutheria</taxon>
        <taxon>Laurasiatheria</taxon>
        <taxon>Artiodactyla</taxon>
        <taxon>Suina</taxon>
        <taxon>Suidae</taxon>
        <taxon>Sus</taxon>
    </lineage>
</organism>
<dbReference type="EMBL" id="DQ321702">
    <property type="protein sequence ID" value="ABC59144.1"/>
    <property type="molecule type" value="mRNA"/>
</dbReference>
<dbReference type="EMBL" id="CU694214">
    <property type="status" value="NOT_ANNOTATED_CDS"/>
    <property type="molecule type" value="Genomic_DNA"/>
</dbReference>
<dbReference type="EMBL" id="AF059740">
    <property type="protein sequence ID" value="AAC16044.1"/>
    <property type="molecule type" value="mRNA"/>
</dbReference>
<dbReference type="RefSeq" id="NP_001123423.1">
    <property type="nucleotide sequence ID" value="NM_001129951.1"/>
</dbReference>
<dbReference type="RefSeq" id="XP_013833190.1">
    <property type="nucleotide sequence ID" value="XM_013977736.1"/>
</dbReference>
<dbReference type="SMR" id="O62809"/>
<dbReference type="FunCoup" id="O62809">
    <property type="interactions" value="150"/>
</dbReference>
<dbReference type="STRING" id="9823.ENSSSCP00000001611"/>
<dbReference type="GlyCosmos" id="O62809">
    <property type="glycosylation" value="3 sites, No reported glycans"/>
</dbReference>
<dbReference type="GlyGen" id="O62809">
    <property type="glycosylation" value="3 sites"/>
</dbReference>
<dbReference type="PaxDb" id="9823-ENSSSCP00000001611"/>
<dbReference type="Ensembl" id="ENSSSCT00000001653.4">
    <property type="protein sequence ID" value="ENSSSCP00000001611.1"/>
    <property type="gene ID" value="ENSSSCG00000001481.4"/>
</dbReference>
<dbReference type="Ensembl" id="ENSSSCT00015013430.1">
    <property type="protein sequence ID" value="ENSSSCP00015005195.1"/>
    <property type="gene ID" value="ENSSSCG00015010253.1"/>
</dbReference>
<dbReference type="Ensembl" id="ENSSSCT00025088090.1">
    <property type="protein sequence ID" value="ENSSSCP00025038439.1"/>
    <property type="gene ID" value="ENSSSCG00025064242.1"/>
</dbReference>
<dbReference type="Ensembl" id="ENSSSCT00030010512.1">
    <property type="protein sequence ID" value="ENSSSCP00030004549.1"/>
    <property type="gene ID" value="ENSSSCG00030007812.1"/>
</dbReference>
<dbReference type="Ensembl" id="ENSSSCT00040027657.1">
    <property type="protein sequence ID" value="ENSSSCP00040011658.1"/>
    <property type="gene ID" value="ENSSSCG00040020515.1"/>
</dbReference>
<dbReference type="Ensembl" id="ENSSSCT00045010613.1">
    <property type="protein sequence ID" value="ENSSSCP00045007231.1"/>
    <property type="gene ID" value="ENSSSCG00045006393.1"/>
</dbReference>
<dbReference type="Ensembl" id="ENSSSCT00050012854.1">
    <property type="protein sequence ID" value="ENSSSCP00050005326.1"/>
    <property type="gene ID" value="ENSSSCG00050009534.1"/>
</dbReference>
<dbReference type="Ensembl" id="ENSSSCT00055023881.1">
    <property type="protein sequence ID" value="ENSSSCP00055018895.1"/>
    <property type="gene ID" value="ENSSSCG00055012193.1"/>
</dbReference>
<dbReference type="Ensembl" id="ENSSSCT00060019648.1">
    <property type="protein sequence ID" value="ENSSSCP00060007979.1"/>
    <property type="gene ID" value="ENSSSCG00060014807.1"/>
</dbReference>
<dbReference type="Ensembl" id="ENSSSCT00065088292.1">
    <property type="protein sequence ID" value="ENSSSCP00065038617.1"/>
    <property type="gene ID" value="ENSSSCG00065064319.1"/>
</dbReference>
<dbReference type="Ensembl" id="ENSSSCT00070037505.1">
    <property type="protein sequence ID" value="ENSSSCP00070031355.1"/>
    <property type="gene ID" value="ENSSSCG00070019003.1"/>
</dbReference>
<dbReference type="Ensembl" id="ENSSSCT00085043763">
    <property type="protein sequence ID" value="ENSSSCP00085030647"/>
    <property type="gene ID" value="ENSSSCG00085022786"/>
</dbReference>
<dbReference type="Ensembl" id="ENSSSCT00090029103">
    <property type="protein sequence ID" value="ENSSSCP00090018038"/>
    <property type="gene ID" value="ENSSSCG00090016495"/>
</dbReference>
<dbReference type="Ensembl" id="ENSSSCT00105031226">
    <property type="protein sequence ID" value="ENSSSCP00105021794"/>
    <property type="gene ID" value="ENSSSCG00105016264"/>
</dbReference>
<dbReference type="Ensembl" id="ENSSSCT00110062059">
    <property type="protein sequence ID" value="ENSSSCP00110043436"/>
    <property type="gene ID" value="ENSSSCG00110032502"/>
</dbReference>
<dbReference type="Ensembl" id="ENSSSCT00115010957">
    <property type="protein sequence ID" value="ENSSSCP00115010319"/>
    <property type="gene ID" value="ENSSSCG00115006341"/>
</dbReference>
<dbReference type="Ensembl" id="ENSSSCT00130037171">
    <property type="protein sequence ID" value="ENSSSCP00130025974"/>
    <property type="gene ID" value="ENSSSCG00130019202"/>
</dbReference>
<dbReference type="GeneID" id="397428"/>
<dbReference type="KEGG" id="ssc:397428"/>
<dbReference type="CTD" id="3062"/>
<dbReference type="VGNC" id="VGNC:88808">
    <property type="gene designation" value="HCRTR2"/>
</dbReference>
<dbReference type="eggNOG" id="KOG3656">
    <property type="taxonomic scope" value="Eukaryota"/>
</dbReference>
<dbReference type="GeneTree" id="ENSGT01130000278294"/>
<dbReference type="InParanoid" id="O62809"/>
<dbReference type="OMA" id="LHIPGMN"/>
<dbReference type="OrthoDB" id="9986530at2759"/>
<dbReference type="TreeFam" id="TF315303"/>
<dbReference type="Reactome" id="R-SSC-389397">
    <property type="pathway name" value="Orexin and neuropeptides FF and QRFP bind to their respective receptors"/>
</dbReference>
<dbReference type="Reactome" id="R-SSC-416476">
    <property type="pathway name" value="G alpha (q) signalling events"/>
</dbReference>
<dbReference type="Proteomes" id="UP000008227">
    <property type="component" value="Chromosome 7"/>
</dbReference>
<dbReference type="Proteomes" id="UP000314985">
    <property type="component" value="Chromosome 7"/>
</dbReference>
<dbReference type="Proteomes" id="UP000694570">
    <property type="component" value="Unplaced"/>
</dbReference>
<dbReference type="Proteomes" id="UP000694571">
    <property type="component" value="Unplaced"/>
</dbReference>
<dbReference type="Proteomes" id="UP000694720">
    <property type="component" value="Unplaced"/>
</dbReference>
<dbReference type="Proteomes" id="UP000694722">
    <property type="component" value="Unplaced"/>
</dbReference>
<dbReference type="Proteomes" id="UP000694723">
    <property type="component" value="Unplaced"/>
</dbReference>
<dbReference type="Proteomes" id="UP000694724">
    <property type="component" value="Unplaced"/>
</dbReference>
<dbReference type="Proteomes" id="UP000694725">
    <property type="component" value="Unplaced"/>
</dbReference>
<dbReference type="Proteomes" id="UP000694726">
    <property type="component" value="Unplaced"/>
</dbReference>
<dbReference type="Proteomes" id="UP000694727">
    <property type="component" value="Unplaced"/>
</dbReference>
<dbReference type="Proteomes" id="UP000694728">
    <property type="component" value="Unplaced"/>
</dbReference>
<dbReference type="Bgee" id="ENSSSCG00000001481">
    <property type="expression patterns" value="Expressed in medulla oblongata and 9 other cell types or tissues"/>
</dbReference>
<dbReference type="GO" id="GO:0005654">
    <property type="term" value="C:nucleoplasm"/>
    <property type="evidence" value="ECO:0007669"/>
    <property type="project" value="Ensembl"/>
</dbReference>
<dbReference type="GO" id="GO:0005886">
    <property type="term" value="C:plasma membrane"/>
    <property type="evidence" value="ECO:0000250"/>
    <property type="project" value="UniProtKB"/>
</dbReference>
<dbReference type="GO" id="GO:0016499">
    <property type="term" value="F:orexin receptor activity"/>
    <property type="evidence" value="ECO:0000250"/>
    <property type="project" value="UniProtKB"/>
</dbReference>
<dbReference type="GO" id="GO:0032870">
    <property type="term" value="P:cellular response to hormone stimulus"/>
    <property type="evidence" value="ECO:0000318"/>
    <property type="project" value="GO_Central"/>
</dbReference>
<dbReference type="GO" id="GO:0022410">
    <property type="term" value="P:circadian sleep/wake cycle process"/>
    <property type="evidence" value="ECO:0007669"/>
    <property type="project" value="InterPro"/>
</dbReference>
<dbReference type="GO" id="GO:0007631">
    <property type="term" value="P:feeding behavior"/>
    <property type="evidence" value="ECO:0007669"/>
    <property type="project" value="InterPro"/>
</dbReference>
<dbReference type="GO" id="GO:0040011">
    <property type="term" value="P:locomotion"/>
    <property type="evidence" value="ECO:0007669"/>
    <property type="project" value="Ensembl"/>
</dbReference>
<dbReference type="GO" id="GO:0007218">
    <property type="term" value="P:neuropeptide signaling pathway"/>
    <property type="evidence" value="ECO:0000250"/>
    <property type="project" value="UniProtKB"/>
</dbReference>
<dbReference type="GO" id="GO:0007200">
    <property type="term" value="P:phospholipase C-activating G protein-coupled receptor signaling pathway"/>
    <property type="evidence" value="ECO:0007669"/>
    <property type="project" value="Ensembl"/>
</dbReference>
<dbReference type="GO" id="GO:0010840">
    <property type="term" value="P:regulation of circadian sleep/wake cycle, wakefulness"/>
    <property type="evidence" value="ECO:0000250"/>
    <property type="project" value="UniProtKB"/>
</dbReference>
<dbReference type="GO" id="GO:0051480">
    <property type="term" value="P:regulation of cytosolic calcium ion concentration"/>
    <property type="evidence" value="ECO:0000250"/>
    <property type="project" value="UniProtKB"/>
</dbReference>
<dbReference type="CDD" id="cd15208">
    <property type="entry name" value="7tmA_OXR"/>
    <property type="match status" value="1"/>
</dbReference>
<dbReference type="FunFam" id="1.20.1070.10:FF:000075">
    <property type="entry name" value="orexin receptor type 2"/>
    <property type="match status" value="1"/>
</dbReference>
<dbReference type="Gene3D" id="1.20.1070.10">
    <property type="entry name" value="Rhodopsin 7-helix transmembrane proteins"/>
    <property type="match status" value="1"/>
</dbReference>
<dbReference type="InterPro" id="IPR000276">
    <property type="entry name" value="GPCR_Rhodpsn"/>
</dbReference>
<dbReference type="InterPro" id="IPR017452">
    <property type="entry name" value="GPCR_Rhodpsn_7TM"/>
</dbReference>
<dbReference type="InterPro" id="IPR000204">
    <property type="entry name" value="Orexin_rcpt"/>
</dbReference>
<dbReference type="InterPro" id="IPR004060">
    <property type="entry name" value="Orexin_rcpt_2"/>
</dbReference>
<dbReference type="PANTHER" id="PTHR45695:SF32">
    <property type="entry name" value="G PROTEIN-COUPLED RECEPTOR 15-LIKE"/>
    <property type="match status" value="1"/>
</dbReference>
<dbReference type="PANTHER" id="PTHR45695">
    <property type="entry name" value="LEUCOKININ RECEPTOR-RELATED"/>
    <property type="match status" value="1"/>
</dbReference>
<dbReference type="Pfam" id="PF00001">
    <property type="entry name" value="7tm_1"/>
    <property type="match status" value="1"/>
</dbReference>
<dbReference type="Pfam" id="PF03827">
    <property type="entry name" value="Orexin_rec2"/>
    <property type="match status" value="1"/>
</dbReference>
<dbReference type="PRINTS" id="PR00237">
    <property type="entry name" value="GPCRRHODOPSN"/>
</dbReference>
<dbReference type="PRINTS" id="PR01522">
    <property type="entry name" value="OREXIN2R"/>
</dbReference>
<dbReference type="PRINTS" id="PR01064">
    <property type="entry name" value="OREXINR"/>
</dbReference>
<dbReference type="SMART" id="SM01381">
    <property type="entry name" value="7TM_GPCR_Srsx"/>
    <property type="match status" value="1"/>
</dbReference>
<dbReference type="SUPFAM" id="SSF81321">
    <property type="entry name" value="Family A G protein-coupled receptor-like"/>
    <property type="match status" value="1"/>
</dbReference>
<dbReference type="PROSITE" id="PS00237">
    <property type="entry name" value="G_PROTEIN_RECEP_F1_1"/>
    <property type="match status" value="1"/>
</dbReference>
<dbReference type="PROSITE" id="PS50262">
    <property type="entry name" value="G_PROTEIN_RECEP_F1_2"/>
    <property type="match status" value="1"/>
</dbReference>
<sequence>MSGTKLEDSPPCRNWSSAPELNETQEPFLNPTDYDDEEFLRYLWREYLHPKEYEWVLIAGYIIVFVVALIGNVLVCVAVWKNHHMRTVTNYFIVNLSLADVLVTITCLPATLVVDITETWFFGQSLCKVIPYLQTVSVSVSVLTLSCIALDRWYAICHPLMFKSTAKRARNSIVIIWIVSCIIMIPQAIVMECSTMLPGLANKTTLFTVCDERWGGEIYPKMYHICFFLVTYMAPLCLMVLAYLQIFRKLWCRQIPGTSSVVQRKWKPLQPVSQPRGPGQQTKSRISAVAAEIKQIRARRKTARMLMVVLLVFAICYLPISILNVLKRVFGMFTHTEDRETVYAWFTFSHWLVYANSAANPIIYNFLSGKFREEFKAAFSCCCLGVHHRQEDRLARGRTSTESRKSLTTQISNFDNISKLSEQVLLTSMSTLPAANGAGQLQNW</sequence>
<protein>
    <recommendedName>
        <fullName>Orexin receptor type 2</fullName>
        <shortName>Ox-2-R</shortName>
        <shortName>Ox2-R</shortName>
        <shortName>Ox2R</shortName>
    </recommendedName>
    <alternativeName>
        <fullName>Hypocretin receptor type 2</fullName>
    </alternativeName>
</protein>
<proteinExistence type="evidence at transcript level"/>
<accession>O62809</accession>
<accession>Q2MK76</accession>
<keyword id="KW-1003">Cell membrane</keyword>
<keyword id="KW-1015">Disulfide bond</keyword>
<keyword id="KW-0297">G-protein coupled receptor</keyword>
<keyword id="KW-0325">Glycoprotein</keyword>
<keyword id="KW-0472">Membrane</keyword>
<keyword id="KW-0675">Receptor</keyword>
<keyword id="KW-1185">Reference proteome</keyword>
<keyword id="KW-0807">Transducer</keyword>
<keyword id="KW-0812">Transmembrane</keyword>
<keyword id="KW-1133">Transmembrane helix</keyword>
<gene>
    <name type="primary">HCRTR2</name>
</gene>
<feature type="chain" id="PRO_0000069991" description="Orexin receptor type 2">
    <location>
        <begin position="1"/>
        <end position="444"/>
    </location>
</feature>
<feature type="topological domain" description="Extracellular" evidence="1">
    <location>
        <begin position="1"/>
        <end position="54"/>
    </location>
</feature>
<feature type="transmembrane region" description="Helical; Name=1" evidence="1">
    <location>
        <begin position="55"/>
        <end position="75"/>
    </location>
</feature>
<feature type="topological domain" description="Cytoplasmic" evidence="1">
    <location>
        <begin position="76"/>
        <end position="88"/>
    </location>
</feature>
<feature type="transmembrane region" description="Helical; Name=2" evidence="1">
    <location>
        <begin position="89"/>
        <end position="110"/>
    </location>
</feature>
<feature type="topological domain" description="Extracellular" evidence="1">
    <location>
        <begin position="111"/>
        <end position="127"/>
    </location>
</feature>
<feature type="transmembrane region" description="Helical; Name=3" evidence="1">
    <location>
        <begin position="128"/>
        <end position="150"/>
    </location>
</feature>
<feature type="topological domain" description="Cytoplasmic" evidence="1">
    <location>
        <begin position="151"/>
        <end position="170"/>
    </location>
</feature>
<feature type="transmembrane region" description="Helical; Name=4" evidence="1">
    <location>
        <begin position="171"/>
        <end position="191"/>
    </location>
</feature>
<feature type="topological domain" description="Extracellular" evidence="1">
    <location>
        <begin position="192"/>
        <end position="222"/>
    </location>
</feature>
<feature type="transmembrane region" description="Helical; Name=5" evidence="1">
    <location>
        <begin position="223"/>
        <end position="243"/>
    </location>
</feature>
<feature type="topological domain" description="Cytoplasmic" evidence="1">
    <location>
        <begin position="244"/>
        <end position="304"/>
    </location>
</feature>
<feature type="transmembrane region" description="Helical; Name=6" evidence="1">
    <location>
        <begin position="305"/>
        <end position="326"/>
    </location>
</feature>
<feature type="topological domain" description="Extracellular" evidence="1">
    <location>
        <begin position="327"/>
        <end position="342"/>
    </location>
</feature>
<feature type="transmembrane region" description="Helical; Name=7" evidence="1">
    <location>
        <begin position="343"/>
        <end position="366"/>
    </location>
</feature>
<feature type="topological domain" description="Cytoplasmic" evidence="1">
    <location>
        <begin position="367"/>
        <end position="444"/>
    </location>
</feature>
<feature type="region of interest" description="Disordered" evidence="4">
    <location>
        <begin position="1"/>
        <end position="30"/>
    </location>
</feature>
<feature type="region of interest" description="Required for response to orexin-A" evidence="1">
    <location>
        <begin position="33"/>
        <end position="49"/>
    </location>
</feature>
<feature type="compositionally biased region" description="Basic and acidic residues" evidence="4">
    <location>
        <begin position="1"/>
        <end position="10"/>
    </location>
</feature>
<feature type="compositionally biased region" description="Polar residues" evidence="4">
    <location>
        <begin position="14"/>
        <end position="27"/>
    </location>
</feature>
<feature type="site" description="Important for responses to orexin" evidence="1">
    <location>
        <position position="44"/>
    </location>
</feature>
<feature type="glycosylation site" description="N-linked (GlcNAc...) asparagine" evidence="2">
    <location>
        <position position="14"/>
    </location>
</feature>
<feature type="glycosylation site" description="N-linked (GlcNAc...) asparagine" evidence="2">
    <location>
        <position position="22"/>
    </location>
</feature>
<feature type="glycosylation site" description="N-linked (GlcNAc...) asparagine" evidence="2">
    <location>
        <position position="202"/>
    </location>
</feature>
<feature type="disulfide bond" evidence="3">
    <location>
        <begin position="127"/>
        <end position="210"/>
    </location>
</feature>
<feature type="sequence conflict" description="In Ref. 3; AAC16044." evidence="5" ref="3">
    <original>C</original>
    <variation>Y</variation>
    <location>
        <position position="181"/>
    </location>
</feature>
<evidence type="ECO:0000250" key="1">
    <source>
        <dbReference type="UniProtKB" id="O43614"/>
    </source>
</evidence>
<evidence type="ECO:0000255" key="2"/>
<evidence type="ECO:0000255" key="3">
    <source>
        <dbReference type="PROSITE-ProRule" id="PRU00521"/>
    </source>
</evidence>
<evidence type="ECO:0000256" key="4">
    <source>
        <dbReference type="SAM" id="MobiDB-lite"/>
    </source>
</evidence>
<evidence type="ECO:0000305" key="5"/>
<evidence type="ECO:0000312" key="6">
    <source>
        <dbReference type="EMBL" id="ABC59144.1"/>
    </source>
</evidence>
<reference evidence="6" key="1">
    <citation type="submission" date="2005-12" db="EMBL/GenBank/DDBJ databases">
        <title>Molecular cloning of the porcine type 2 orexin receptor.</title>
        <authorList>
            <person name="Bin Y.F."/>
        </authorList>
    </citation>
    <scope>NUCLEOTIDE SEQUENCE [MRNA]</scope>
    <source>
        <tissue evidence="6">Hypothalamus</tissue>
    </source>
</reference>
<reference key="2">
    <citation type="submission" date="2009-11" db="EMBL/GenBank/DDBJ databases">
        <authorList>
            <consortium name="Porcine genome sequencing project"/>
        </authorList>
    </citation>
    <scope>NUCLEOTIDE SEQUENCE [LARGE SCALE GENOMIC DNA]</scope>
    <source>
        <strain>Duroc</strain>
    </source>
</reference>
<reference key="3">
    <citation type="submission" date="1998-04" db="EMBL/GenBank/DDBJ databases">
        <title>Partial cDNA sequence of the porcine type 2 orexin receptor.</title>
        <authorList>
            <person name="Matteri R.L."/>
            <person name="Dyer C.J."/>
        </authorList>
    </citation>
    <scope>NUCLEOTIDE SEQUENCE [MRNA] OF 106-182</scope>
    <source>
        <tissue>Hypothalamus</tissue>
    </source>
</reference>
<name>OX2R_PIG</name>
<comment type="function">
    <text evidence="1">Nonselective, high-affinity receptor for both orexin-A and orexin-B neuropeptides. Triggers an increase in cytoplasmic Ca(2+) levels in response to orexin-A binding.</text>
</comment>
<comment type="subcellular location">
    <subcellularLocation>
        <location evidence="1">Cell membrane</location>
        <topology evidence="1">Multi-pass membrane protein</topology>
    </subcellularLocation>
</comment>
<comment type="domain">
    <text evidence="1">The N-terminal region is required for orexin signaling.</text>
</comment>
<comment type="similarity">
    <text evidence="3">Belongs to the G-protein coupled receptor 1 family.</text>
</comment>